<dbReference type="EMBL" id="CP000605">
    <property type="protein sequence ID" value="ACD98033.1"/>
    <property type="molecule type" value="Genomic_DNA"/>
</dbReference>
<dbReference type="RefSeq" id="WP_007052163.1">
    <property type="nucleotide sequence ID" value="NZ_AABM02000001.1"/>
</dbReference>
<dbReference type="SMR" id="B3DSB4"/>
<dbReference type="KEGG" id="blj:BLD_0587"/>
<dbReference type="HOGENOM" id="CLU_075939_1_0_11"/>
<dbReference type="Proteomes" id="UP000002419">
    <property type="component" value="Chromosome"/>
</dbReference>
<dbReference type="GO" id="GO:0022625">
    <property type="term" value="C:cytosolic large ribosomal subunit"/>
    <property type="evidence" value="ECO:0007669"/>
    <property type="project" value="TreeGrafter"/>
</dbReference>
<dbReference type="GO" id="GO:0008097">
    <property type="term" value="F:5S rRNA binding"/>
    <property type="evidence" value="ECO:0007669"/>
    <property type="project" value="InterPro"/>
</dbReference>
<dbReference type="GO" id="GO:0003735">
    <property type="term" value="F:structural constituent of ribosome"/>
    <property type="evidence" value="ECO:0007669"/>
    <property type="project" value="InterPro"/>
</dbReference>
<dbReference type="GO" id="GO:0006412">
    <property type="term" value="P:translation"/>
    <property type="evidence" value="ECO:0007669"/>
    <property type="project" value="UniProtKB-UniRule"/>
</dbReference>
<dbReference type="CDD" id="cd00495">
    <property type="entry name" value="Ribosomal_L25_TL5_CTC"/>
    <property type="match status" value="1"/>
</dbReference>
<dbReference type="Gene3D" id="2.170.120.20">
    <property type="entry name" value="Ribosomal protein L25, beta domain"/>
    <property type="match status" value="1"/>
</dbReference>
<dbReference type="Gene3D" id="2.40.240.10">
    <property type="entry name" value="Ribosomal Protein L25, Chain P"/>
    <property type="match status" value="1"/>
</dbReference>
<dbReference type="HAMAP" id="MF_01334">
    <property type="entry name" value="Ribosomal_bL25_CTC"/>
    <property type="match status" value="1"/>
</dbReference>
<dbReference type="InterPro" id="IPR020056">
    <property type="entry name" value="Rbsml_bL25/Gln-tRNA_synth_N"/>
</dbReference>
<dbReference type="InterPro" id="IPR011035">
    <property type="entry name" value="Ribosomal_bL25/Gln-tRNA_synth"/>
</dbReference>
<dbReference type="InterPro" id="IPR020057">
    <property type="entry name" value="Ribosomal_bL25_b-dom"/>
</dbReference>
<dbReference type="InterPro" id="IPR037121">
    <property type="entry name" value="Ribosomal_bL25_C"/>
</dbReference>
<dbReference type="InterPro" id="IPR001021">
    <property type="entry name" value="Ribosomal_bL25_long"/>
</dbReference>
<dbReference type="InterPro" id="IPR029751">
    <property type="entry name" value="Ribosomal_L25_dom"/>
</dbReference>
<dbReference type="InterPro" id="IPR020930">
    <property type="entry name" value="Ribosomal_uL5_bac-type"/>
</dbReference>
<dbReference type="NCBIfam" id="TIGR00731">
    <property type="entry name" value="bL25_bact_ctc"/>
    <property type="match status" value="1"/>
</dbReference>
<dbReference type="NCBIfam" id="NF004131">
    <property type="entry name" value="PRK05618.2-1"/>
    <property type="match status" value="1"/>
</dbReference>
<dbReference type="PANTHER" id="PTHR33284">
    <property type="entry name" value="RIBOSOMAL PROTEIN L25/GLN-TRNA SYNTHETASE, ANTI-CODON-BINDING DOMAIN-CONTAINING PROTEIN"/>
    <property type="match status" value="1"/>
</dbReference>
<dbReference type="PANTHER" id="PTHR33284:SF1">
    <property type="entry name" value="RIBOSOMAL PROTEIN L25_GLN-TRNA SYNTHETASE, ANTI-CODON-BINDING DOMAIN-CONTAINING PROTEIN"/>
    <property type="match status" value="1"/>
</dbReference>
<dbReference type="Pfam" id="PF01386">
    <property type="entry name" value="Ribosomal_L25p"/>
    <property type="match status" value="1"/>
</dbReference>
<dbReference type="Pfam" id="PF14693">
    <property type="entry name" value="Ribosomal_TL5_C"/>
    <property type="match status" value="1"/>
</dbReference>
<dbReference type="SUPFAM" id="SSF50715">
    <property type="entry name" value="Ribosomal protein L25-like"/>
    <property type="match status" value="1"/>
</dbReference>
<proteinExistence type="inferred from homology"/>
<name>RL25_BIFLD</name>
<sequence length="206" mass="21815">MATTIKLEGEARSEFGKGVARRLRVANKIPATIYAGGEEPAFVTLPMRETTLALRHTNALFTIAFDGNTKMAVVKDVQKNPVKRIIEHVDFLEVKAGEKIDVEVPVFVEGTPKGAAVAFVDIQELKVRADVANLPEKIVVSVEGLTDGTKVFAKDVVLPEGVELDVEDPEESVVTVEVPEDASESTAAPEAAAPAADAAAPAADAK</sequence>
<reference key="1">
    <citation type="journal article" date="2008" name="BMC Genomics">
        <title>Comparative genomic analysis of the gut bacterium Bifidobacterium longum reveals loci susceptible to deletion during pure culture growth.</title>
        <authorList>
            <person name="Lee J.H."/>
            <person name="Karamychev V.N."/>
            <person name="Kozyavkin S.A."/>
            <person name="Mills D."/>
            <person name="Pavlov A.R."/>
            <person name="Pavlova N.V."/>
            <person name="Polouchine N.N."/>
            <person name="Richardson P.M."/>
            <person name="Shakhova V.V."/>
            <person name="Slesarev A.I."/>
            <person name="Weimer B."/>
            <person name="O'Sullivan D.J."/>
        </authorList>
    </citation>
    <scope>NUCLEOTIDE SEQUENCE [LARGE SCALE GENOMIC DNA]</scope>
    <source>
        <strain>DJO10A</strain>
    </source>
</reference>
<organism>
    <name type="scientific">Bifidobacterium longum (strain DJO10A)</name>
    <dbReference type="NCBI Taxonomy" id="205913"/>
    <lineage>
        <taxon>Bacteria</taxon>
        <taxon>Bacillati</taxon>
        <taxon>Actinomycetota</taxon>
        <taxon>Actinomycetes</taxon>
        <taxon>Bifidobacteriales</taxon>
        <taxon>Bifidobacteriaceae</taxon>
        <taxon>Bifidobacterium</taxon>
    </lineage>
</organism>
<gene>
    <name evidence="1" type="primary">rplY</name>
    <name evidence="1" type="synonym">ctc</name>
    <name type="ordered locus">BLD_0587</name>
</gene>
<evidence type="ECO:0000255" key="1">
    <source>
        <dbReference type="HAMAP-Rule" id="MF_01334"/>
    </source>
</evidence>
<evidence type="ECO:0000256" key="2">
    <source>
        <dbReference type="SAM" id="MobiDB-lite"/>
    </source>
</evidence>
<evidence type="ECO:0000305" key="3"/>
<feature type="chain" id="PRO_1000142488" description="Large ribosomal subunit protein bL25">
    <location>
        <begin position="1"/>
        <end position="206"/>
    </location>
</feature>
<feature type="region of interest" description="Disordered" evidence="2">
    <location>
        <begin position="168"/>
        <end position="206"/>
    </location>
</feature>
<feature type="compositionally biased region" description="Low complexity" evidence="2">
    <location>
        <begin position="184"/>
        <end position="206"/>
    </location>
</feature>
<keyword id="KW-0687">Ribonucleoprotein</keyword>
<keyword id="KW-0689">Ribosomal protein</keyword>
<keyword id="KW-0694">RNA-binding</keyword>
<keyword id="KW-0699">rRNA-binding</keyword>
<comment type="function">
    <text evidence="1">This is one of the proteins that binds to the 5S RNA in the ribosome where it forms part of the central protuberance.</text>
</comment>
<comment type="subunit">
    <text evidence="1">Part of the 50S ribosomal subunit; part of the 5S rRNA/L5/L18/L25 subcomplex. Contacts the 5S rRNA. Binds to the 5S rRNA independently of L5 and L18.</text>
</comment>
<comment type="similarity">
    <text evidence="1">Belongs to the bacterial ribosomal protein bL25 family. CTC subfamily.</text>
</comment>
<protein>
    <recommendedName>
        <fullName evidence="1">Large ribosomal subunit protein bL25</fullName>
    </recommendedName>
    <alternativeName>
        <fullName evidence="3">50S ribosomal protein L25</fullName>
    </alternativeName>
    <alternativeName>
        <fullName evidence="1">General stress protein CTC</fullName>
    </alternativeName>
</protein>
<accession>B3DSB4</accession>